<protein>
    <recommendedName>
        <fullName evidence="5">Conotoxin Mr15.2</fullName>
    </recommendedName>
    <alternativeName>
        <fullName evidence="4">Mr094</fullName>
    </alternativeName>
</protein>
<sequence>MSTLKMMLLILLLLLPMATFDSDGQAIPGGGIPSAVNSRVGGDEKSGRSLEKRCRSGKTCPRVGPDVCCERSDCFCKLVPARPFWRYRCICL</sequence>
<proteinExistence type="evidence at protein level"/>
<dbReference type="TCDB" id="8.B.16.3.3">
    <property type="family name" value="the maurocalcine (maca) family"/>
</dbReference>
<dbReference type="GO" id="GO:0005576">
    <property type="term" value="C:extracellular region"/>
    <property type="evidence" value="ECO:0007669"/>
    <property type="project" value="UniProtKB-SubCell"/>
</dbReference>
<dbReference type="GO" id="GO:0090729">
    <property type="term" value="F:toxin activity"/>
    <property type="evidence" value="ECO:0007669"/>
    <property type="project" value="UniProtKB-KW"/>
</dbReference>
<keyword id="KW-0165">Cleavage on pair of basic residues</keyword>
<keyword id="KW-1015">Disulfide bond</keyword>
<keyword id="KW-0964">Secreted</keyword>
<keyword id="KW-0732">Signal</keyword>
<keyword id="KW-0800">Toxin</keyword>
<accession>P0DM19</accession>
<reference key="1">
    <citation type="journal article" date="2013" name="Mol. Cell. Proteomics">
        <title>Deep venomics reveals the mechanism for expanded peptide diversity in cone snail venom.</title>
        <authorList>
            <person name="Dutertre S."/>
            <person name="Jin A.H."/>
            <person name="Kaas Q."/>
            <person name="Jones A."/>
            <person name="Alewood P.F."/>
            <person name="Lewis R.J."/>
        </authorList>
    </citation>
    <scope>NUCLEOTIDE SEQUENCE [MRNA]</scope>
    <scope>IDENTIFICATION BY MASS SPECTROMETRY</scope>
    <scope>SUBCELLULAR LOCATION</scope>
</reference>
<feature type="signal peptide" evidence="1">
    <location>
        <begin position="1"/>
        <end position="20"/>
    </location>
</feature>
<feature type="propeptide" id="PRO_0000444685" evidence="6">
    <location>
        <begin position="21"/>
        <end position="53"/>
    </location>
</feature>
<feature type="chain" id="PRO_0000444686" description="Conotoxin Mr15.2" evidence="3">
    <location>
        <begin position="54"/>
        <end position="92"/>
    </location>
</feature>
<feature type="region of interest" description="Disordered" evidence="2">
    <location>
        <begin position="30"/>
        <end position="49"/>
    </location>
</feature>
<comment type="subcellular location">
    <subcellularLocation>
        <location evidence="3">Secreted</location>
    </subcellularLocation>
</comment>
<comment type="tissue specificity">
    <text evidence="6">Expressed by the venom duct.</text>
</comment>
<comment type="domain">
    <text evidence="5">The cysteine framework is XV (C-C-CC-C-C-C-C).</text>
</comment>
<comment type="PTM">
    <text evidence="5">Contains 4 disulfide bonds.</text>
</comment>
<comment type="similarity">
    <text evidence="5">Belongs to the conotoxin N superfamily.</text>
</comment>
<organism>
    <name type="scientific">Conus marmoreus</name>
    <name type="common">Marble cone</name>
    <dbReference type="NCBI Taxonomy" id="42752"/>
    <lineage>
        <taxon>Eukaryota</taxon>
        <taxon>Metazoa</taxon>
        <taxon>Spiralia</taxon>
        <taxon>Lophotrochozoa</taxon>
        <taxon>Mollusca</taxon>
        <taxon>Gastropoda</taxon>
        <taxon>Caenogastropoda</taxon>
        <taxon>Neogastropoda</taxon>
        <taxon>Conoidea</taxon>
        <taxon>Conidae</taxon>
        <taxon>Conus</taxon>
    </lineage>
</organism>
<name>NF2_CONMR</name>
<evidence type="ECO:0000255" key="1"/>
<evidence type="ECO:0000256" key="2">
    <source>
        <dbReference type="SAM" id="MobiDB-lite"/>
    </source>
</evidence>
<evidence type="ECO:0000269" key="3">
    <source>
    </source>
</evidence>
<evidence type="ECO:0000303" key="4">
    <source>
    </source>
</evidence>
<evidence type="ECO:0000305" key="5"/>
<evidence type="ECO:0000305" key="6">
    <source>
    </source>
</evidence>